<accession>E0TW67</accession>
<dbReference type="EC" id="1.10.3.-"/>
<dbReference type="EMBL" id="CP002183">
    <property type="protein sequence ID" value="ADM39809.1"/>
    <property type="status" value="ALT_INIT"/>
    <property type="molecule type" value="Genomic_DNA"/>
</dbReference>
<dbReference type="SMR" id="E0TW67"/>
<dbReference type="KEGG" id="bss:BSUW23_18875"/>
<dbReference type="HOGENOM" id="CLU_036876_6_0_9"/>
<dbReference type="Proteomes" id="UP000002233">
    <property type="component" value="Chromosome"/>
</dbReference>
<dbReference type="GO" id="GO:0005886">
    <property type="term" value="C:plasma membrane"/>
    <property type="evidence" value="ECO:0007669"/>
    <property type="project" value="UniProtKB-SubCell"/>
</dbReference>
<dbReference type="GO" id="GO:0005507">
    <property type="term" value="F:copper ion binding"/>
    <property type="evidence" value="ECO:0007669"/>
    <property type="project" value="InterPro"/>
</dbReference>
<dbReference type="GO" id="GO:0009486">
    <property type="term" value="F:cytochrome bo3 ubiquinol oxidase activity"/>
    <property type="evidence" value="ECO:0007669"/>
    <property type="project" value="InterPro"/>
</dbReference>
<dbReference type="GO" id="GO:0004129">
    <property type="term" value="F:cytochrome-c oxidase activity"/>
    <property type="evidence" value="ECO:0007669"/>
    <property type="project" value="InterPro"/>
</dbReference>
<dbReference type="GO" id="GO:0016682">
    <property type="term" value="F:oxidoreductase activity, acting on diphenols and related substances as donors, oxygen as acceptor"/>
    <property type="evidence" value="ECO:0007669"/>
    <property type="project" value="InterPro"/>
</dbReference>
<dbReference type="GO" id="GO:0042773">
    <property type="term" value="P:ATP synthesis coupled electron transport"/>
    <property type="evidence" value="ECO:0007669"/>
    <property type="project" value="TreeGrafter"/>
</dbReference>
<dbReference type="CDD" id="cd04212">
    <property type="entry name" value="CuRO_UO_II"/>
    <property type="match status" value="1"/>
</dbReference>
<dbReference type="FunFam" id="2.60.40.420:FF:000014">
    <property type="entry name" value="Quinol oxidase subunit 2"/>
    <property type="match status" value="1"/>
</dbReference>
<dbReference type="Gene3D" id="1.10.287.90">
    <property type="match status" value="1"/>
</dbReference>
<dbReference type="Gene3D" id="2.60.40.420">
    <property type="entry name" value="Cupredoxins - blue copper proteins"/>
    <property type="match status" value="1"/>
</dbReference>
<dbReference type="InterPro" id="IPR045187">
    <property type="entry name" value="CcO_II"/>
</dbReference>
<dbReference type="InterPro" id="IPR002429">
    <property type="entry name" value="CcO_II-like_C"/>
</dbReference>
<dbReference type="InterPro" id="IPR008972">
    <property type="entry name" value="Cupredoxin"/>
</dbReference>
<dbReference type="InterPro" id="IPR034227">
    <property type="entry name" value="CuRO_UO_II"/>
</dbReference>
<dbReference type="InterPro" id="IPR011759">
    <property type="entry name" value="Cyt_c_oxidase_su2_TM_dom"/>
</dbReference>
<dbReference type="InterPro" id="IPR036257">
    <property type="entry name" value="Cyt_c_oxidase_su2_TM_sf"/>
</dbReference>
<dbReference type="InterPro" id="IPR006333">
    <property type="entry name" value="Cyt_o_ubiquinol_oxidase_su2"/>
</dbReference>
<dbReference type="InterPro" id="IPR006332">
    <property type="entry name" value="QoxA"/>
</dbReference>
<dbReference type="NCBIfam" id="TIGR01432">
    <property type="entry name" value="QOXA"/>
    <property type="match status" value="1"/>
</dbReference>
<dbReference type="PANTHER" id="PTHR22888:SF18">
    <property type="entry name" value="CYTOCHROME BO(3) UBIQUINOL OXIDASE SUBUNIT 2"/>
    <property type="match status" value="1"/>
</dbReference>
<dbReference type="PANTHER" id="PTHR22888">
    <property type="entry name" value="CYTOCHROME C OXIDASE, SUBUNIT II"/>
    <property type="match status" value="1"/>
</dbReference>
<dbReference type="Pfam" id="PF00116">
    <property type="entry name" value="COX2"/>
    <property type="match status" value="1"/>
</dbReference>
<dbReference type="Pfam" id="PF02790">
    <property type="entry name" value="COX2_TM"/>
    <property type="match status" value="1"/>
</dbReference>
<dbReference type="PIRSF" id="PIRSF000292">
    <property type="entry name" value="Ubi_od_II"/>
    <property type="match status" value="1"/>
</dbReference>
<dbReference type="SUPFAM" id="SSF49503">
    <property type="entry name" value="Cupredoxins"/>
    <property type="match status" value="1"/>
</dbReference>
<dbReference type="SUPFAM" id="SSF81464">
    <property type="entry name" value="Cytochrome c oxidase subunit II-like, transmembrane region"/>
    <property type="match status" value="1"/>
</dbReference>
<dbReference type="PROSITE" id="PS50857">
    <property type="entry name" value="COX2_CUA"/>
    <property type="match status" value="1"/>
</dbReference>
<dbReference type="PROSITE" id="PS50999">
    <property type="entry name" value="COX2_TM"/>
    <property type="match status" value="1"/>
</dbReference>
<dbReference type="PROSITE" id="PS51257">
    <property type="entry name" value="PROKAR_LIPOPROTEIN"/>
    <property type="match status" value="1"/>
</dbReference>
<protein>
    <recommendedName>
        <fullName>Quinol oxidase subunit 2</fullName>
        <ecNumber>1.10.3.-</ecNumber>
    </recommendedName>
    <alternativeName>
        <fullName>Oxidase aa(3)-600 subunit 2</fullName>
    </alternativeName>
    <alternativeName>
        <fullName>Quinol oxidase aa3-600, subunit qoxA</fullName>
    </alternativeName>
    <alternativeName>
        <fullName>Quinol oxidase polypeptide II</fullName>
    </alternativeName>
</protein>
<feature type="signal peptide" evidence="2 4">
    <location>
        <begin position="1"/>
        <end position="25"/>
    </location>
</feature>
<feature type="chain" id="PRO_0000402830" description="Quinol oxidase subunit 2">
    <location>
        <begin position="26"/>
        <end position="321"/>
    </location>
</feature>
<feature type="transmembrane region" description="Helical" evidence="1">
    <location>
        <begin position="49"/>
        <end position="69"/>
    </location>
</feature>
<feature type="transmembrane region" description="Helical" evidence="1">
    <location>
        <begin position="90"/>
        <end position="110"/>
    </location>
</feature>
<feature type="region of interest" description="Disordered" evidence="3">
    <location>
        <begin position="294"/>
        <end position="321"/>
    </location>
</feature>
<feature type="compositionally biased region" description="Basic and acidic residues" evidence="3">
    <location>
        <begin position="300"/>
        <end position="321"/>
    </location>
</feature>
<feature type="lipid moiety-binding region" description="N-palmitoyl cysteine" evidence="2">
    <location>
        <position position="26"/>
    </location>
</feature>
<feature type="lipid moiety-binding region" description="S-diacylglycerol cysteine" evidence="2">
    <location>
        <position position="26"/>
    </location>
</feature>
<sequence>MIFLFRALKPLLVLALLTVVFVLGGCSNASVLDPKGPVAEQQSDLILLSIGFMLFIVGVVFVLFTIILVKYRDRKGKDNGSYNPKIHGNTFLEVVWTVIPILIVIALSVPTVQTIYSLEKAPEATKDKEPLVVHATSVDWKWVFSYPEQDIETVNYLNIPVDRPILFKISSADSMASLWIPQLGGQKYAMAGMLMDQYLQADEVGTYQGRNANFTGEHFADQEFDVNAVTEKDFNSWVKKTQNEAPKLTKEKYDQLMLPENVDELTFSSTHLKYVDHGQDAEYAMEARKRLGYQAVSPHSKTDPFENVKENEFKKSDDTEE</sequence>
<name>QOX2_BACSH</name>
<organism>
    <name type="scientific">Bacillus spizizenii (strain ATCC 23059 / NRRL B-14472 / W23)</name>
    <name type="common">Bacillus subtilis subsp. spizizenii</name>
    <dbReference type="NCBI Taxonomy" id="655816"/>
    <lineage>
        <taxon>Bacteria</taxon>
        <taxon>Bacillati</taxon>
        <taxon>Bacillota</taxon>
        <taxon>Bacilli</taxon>
        <taxon>Bacillales</taxon>
        <taxon>Bacillaceae</taxon>
        <taxon>Bacillus</taxon>
    </lineage>
</organism>
<comment type="function">
    <text>Catalyzes quinol oxidation with the concomitant reduction of oxygen to water. Major component for energy conversion during vegetative growth. Subunit II transfers the electrons from a quinol to the binuclear center of the catalytic subunit I.</text>
</comment>
<comment type="catalytic activity">
    <reaction>
        <text>2 a quinol + O2 = 2 a quinone + 2 H2O</text>
        <dbReference type="Rhea" id="RHEA:55376"/>
        <dbReference type="ChEBI" id="CHEBI:15377"/>
        <dbReference type="ChEBI" id="CHEBI:15379"/>
        <dbReference type="ChEBI" id="CHEBI:24646"/>
        <dbReference type="ChEBI" id="CHEBI:132124"/>
    </reaction>
</comment>
<comment type="subcellular location">
    <subcellularLocation>
        <location>Cell membrane</location>
        <topology>Multi-pass membrane protein</topology>
    </subcellularLocation>
</comment>
<comment type="similarity">
    <text evidence="5">Belongs to the cytochrome c oxidase subunit 2 family.</text>
</comment>
<comment type="sequence caution" evidence="5">
    <conflict type="erroneous initiation">
        <sequence resource="EMBL-CDS" id="ADM39809"/>
    </conflict>
    <text>Truncated N-terminus.</text>
</comment>
<gene>
    <name type="primary">qoxA</name>
    <name type="ordered locus">BSUW23_18875</name>
</gene>
<keyword id="KW-1003">Cell membrane</keyword>
<keyword id="KW-0903">Direct protein sequencing</keyword>
<keyword id="KW-0249">Electron transport</keyword>
<keyword id="KW-0449">Lipoprotein</keyword>
<keyword id="KW-0472">Membrane</keyword>
<keyword id="KW-0560">Oxidoreductase</keyword>
<keyword id="KW-0564">Palmitate</keyword>
<keyword id="KW-0679">Respiratory chain</keyword>
<keyword id="KW-0732">Signal</keyword>
<keyword id="KW-0812">Transmembrane</keyword>
<keyword id="KW-1133">Transmembrane helix</keyword>
<keyword id="KW-0813">Transport</keyword>
<evidence type="ECO:0000255" key="1"/>
<evidence type="ECO:0000255" key="2">
    <source>
        <dbReference type="PROSITE-ProRule" id="PRU00303"/>
    </source>
</evidence>
<evidence type="ECO:0000256" key="3">
    <source>
        <dbReference type="SAM" id="MobiDB-lite"/>
    </source>
</evidence>
<evidence type="ECO:0000269" key="4">
    <source>
    </source>
</evidence>
<evidence type="ECO:0000305" key="5"/>
<proteinExistence type="evidence at protein level"/>
<reference key="1">
    <citation type="journal article" date="2011" name="Microbiology">
        <title>The genome sequence of Bacillus subtilis subsp. spizizenii W23: insights into speciation within the B. subtilis complex and into the history of B. subtilis genetics.</title>
        <authorList>
            <person name="Zeigler D.R."/>
        </authorList>
    </citation>
    <scope>NUCLEOTIDE SEQUENCE [LARGE SCALE GENOMIC DNA]</scope>
    <source>
        <strain>ATCC 23059 / NRRL B-14472 / W23</strain>
    </source>
</reference>
<reference key="2">
    <citation type="journal article" date="1995" name="Arch. Microbiol.">
        <title>Properties of the menaquinol oxidase (Qox) and of qox deletion mutants of Bacillus subtilis.</title>
        <authorList>
            <person name="Lemma E."/>
            <person name="Simon J."/>
            <person name="Schagger H."/>
            <person name="Kroger A."/>
        </authorList>
    </citation>
    <scope>PROTEIN SEQUENCE OF 26-42</scope>
    <scope>CHARACTERIZATION</scope>
    <source>
        <strain>ATCC 23059 / NRRL B-14472 / W23</strain>
    </source>
</reference>